<dbReference type="EC" id="4.2.3.71" evidence="4"/>
<dbReference type="EMBL" id="JAATIQ010000272">
    <property type="protein sequence ID" value="KAF4365547.1"/>
    <property type="molecule type" value="Genomic_DNA"/>
</dbReference>
<dbReference type="EMBL" id="MK131289">
    <property type="protein sequence ID" value="QCQ18307.1"/>
    <property type="molecule type" value="mRNA"/>
</dbReference>
<dbReference type="SMR" id="A0A4Y5L9K3"/>
<dbReference type="UniPathway" id="UPA00213"/>
<dbReference type="Proteomes" id="UP000583929">
    <property type="component" value="Unassembled WGS sequence"/>
</dbReference>
<dbReference type="Proteomes" id="UP000596661">
    <property type="component" value="Unplaced"/>
</dbReference>
<dbReference type="GO" id="GO:0000287">
    <property type="term" value="F:magnesium ion binding"/>
    <property type="evidence" value="ECO:0007669"/>
    <property type="project" value="InterPro"/>
</dbReference>
<dbReference type="GO" id="GO:0010333">
    <property type="term" value="F:terpene synthase activity"/>
    <property type="evidence" value="ECO:0007669"/>
    <property type="project" value="InterPro"/>
</dbReference>
<dbReference type="GO" id="GO:0016102">
    <property type="term" value="P:diterpenoid biosynthetic process"/>
    <property type="evidence" value="ECO:0007669"/>
    <property type="project" value="InterPro"/>
</dbReference>
<dbReference type="CDD" id="cd00684">
    <property type="entry name" value="Terpene_cyclase_plant_C1"/>
    <property type="match status" value="1"/>
</dbReference>
<dbReference type="FunFam" id="1.10.600.10:FF:000007">
    <property type="entry name" value="Isoprene synthase, chloroplastic"/>
    <property type="match status" value="1"/>
</dbReference>
<dbReference type="FunFam" id="1.50.10.130:FF:000001">
    <property type="entry name" value="Isoprene synthase, chloroplastic"/>
    <property type="match status" value="1"/>
</dbReference>
<dbReference type="Gene3D" id="1.10.600.10">
    <property type="entry name" value="Farnesyl Diphosphate Synthase"/>
    <property type="match status" value="1"/>
</dbReference>
<dbReference type="Gene3D" id="1.50.10.130">
    <property type="entry name" value="Terpene synthase, N-terminal domain"/>
    <property type="match status" value="1"/>
</dbReference>
<dbReference type="InterPro" id="IPR008949">
    <property type="entry name" value="Isoprenoid_synthase_dom_sf"/>
</dbReference>
<dbReference type="InterPro" id="IPR034741">
    <property type="entry name" value="Terpene_cyclase-like_1_C"/>
</dbReference>
<dbReference type="InterPro" id="IPR044814">
    <property type="entry name" value="Terpene_cyclase_plant_C1"/>
</dbReference>
<dbReference type="InterPro" id="IPR001906">
    <property type="entry name" value="Terpene_synth_N"/>
</dbReference>
<dbReference type="InterPro" id="IPR036965">
    <property type="entry name" value="Terpene_synth_N_sf"/>
</dbReference>
<dbReference type="InterPro" id="IPR050148">
    <property type="entry name" value="Terpene_synthase-like"/>
</dbReference>
<dbReference type="InterPro" id="IPR005630">
    <property type="entry name" value="Terpene_synthase_metal-bd"/>
</dbReference>
<dbReference type="InterPro" id="IPR008930">
    <property type="entry name" value="Terpenoid_cyclase/PrenylTrfase"/>
</dbReference>
<dbReference type="PANTHER" id="PTHR31225:SF221">
    <property type="entry name" value="(-)-GERMACRENE D SYNTHASE"/>
    <property type="match status" value="1"/>
</dbReference>
<dbReference type="PANTHER" id="PTHR31225">
    <property type="entry name" value="OS04G0344100 PROTEIN-RELATED"/>
    <property type="match status" value="1"/>
</dbReference>
<dbReference type="Pfam" id="PF01397">
    <property type="entry name" value="Terpene_synth"/>
    <property type="match status" value="1"/>
</dbReference>
<dbReference type="Pfam" id="PF03936">
    <property type="entry name" value="Terpene_synth_C"/>
    <property type="match status" value="1"/>
</dbReference>
<dbReference type="SFLD" id="SFLDS00005">
    <property type="entry name" value="Isoprenoid_Synthase_Type_I"/>
    <property type="match status" value="1"/>
</dbReference>
<dbReference type="SFLD" id="SFLDG01019">
    <property type="entry name" value="Terpene_Cyclase_Like_1_C_Termi"/>
    <property type="match status" value="1"/>
</dbReference>
<dbReference type="SUPFAM" id="SSF48239">
    <property type="entry name" value="Terpenoid cyclases/Protein prenyltransferases"/>
    <property type="match status" value="1"/>
</dbReference>
<dbReference type="SUPFAM" id="SSF48576">
    <property type="entry name" value="Terpenoid synthases"/>
    <property type="match status" value="1"/>
</dbReference>
<gene>
    <name evidence="5" type="primary">TPS16CC</name>
    <name evidence="7" type="ORF">G4B88_025726</name>
</gene>
<keyword id="KW-0456">Lyase</keyword>
<keyword id="KW-0460">Magnesium</keyword>
<keyword id="KW-0479">Metal-binding</keyword>
<keyword id="KW-1185">Reference proteome</keyword>
<reference key="1">
    <citation type="journal article" date="2019" name="Plant Physiol.">
        <title>Gene networks underlying cannabinoid and terpenoid accumulation in cannabis.</title>
        <authorList>
            <person name="Zager J.J."/>
            <person name="Lange I."/>
            <person name="Srividya N."/>
            <person name="Smith A."/>
            <person name="Lange B.M."/>
        </authorList>
    </citation>
    <scope>NUCLEOTIDE SEQUENCE [MRNA]</scope>
    <scope>FUNCTION</scope>
    <scope>CATALYTIC ACTIVITY</scope>
    <scope>PATHWAY</scope>
    <scope>TISSUE SPECIFICITY</scope>
    <source>
        <strain>cv. Black Lime</strain>
        <strain>cv. Blackberry Kush</strain>
        <strain>cv. Canna Tsu</strain>
        <strain>cv. Cherry Chem</strain>
        <strain>cv. Mama Thai</strain>
        <strain>cv. Sour Diesel</strain>
        <strain>cv. Terple</strain>
        <strain>cv. Valley Fire</strain>
        <strain>cv. White Cookies</strain>
        <tissue>Trichome gland</tissue>
    </source>
</reference>
<reference key="2">
    <citation type="submission" date="2020-03" db="EMBL/GenBank/DDBJ databases">
        <title>Sequence and annotation of 42 cannabis genomes reveals extensive copy number variation in cannabinoid synthesis and pathogen resistance genes.</title>
        <authorList>
            <person name="Mckernan K.J."/>
            <person name="Helbert Y."/>
            <person name="Kane L.T."/>
            <person name="Ebling H."/>
            <person name="Zhang L."/>
            <person name="Liu B."/>
            <person name="Eaton Z."/>
            <person name="Mclaughlin S."/>
            <person name="Kingan S."/>
            <person name="Baybayan P."/>
            <person name="Concepcion G."/>
            <person name="Jordan M."/>
            <person name="Riva A."/>
            <person name="Barbazuk W."/>
            <person name="Harkins T."/>
        </authorList>
    </citation>
    <scope>NUCLEOTIDE SEQUENCE [LARGE SCALE GENOMIC DNA]</scope>
    <source>
        <strain>cv. Jamaican Lion 4</strain>
        <tissue>Leaf</tissue>
    </source>
</reference>
<accession>A0A4Y5L9K3</accession>
<evidence type="ECO:0000250" key="1">
    <source>
        <dbReference type="UniProtKB" id="A0A1C9J6A7"/>
    </source>
</evidence>
<evidence type="ECO:0000250" key="2">
    <source>
        <dbReference type="UniProtKB" id="A0A1V0QSF6"/>
    </source>
</evidence>
<evidence type="ECO:0000250" key="3">
    <source>
        <dbReference type="UniProtKB" id="Q40577"/>
    </source>
</evidence>
<evidence type="ECO:0000269" key="4">
    <source>
    </source>
</evidence>
<evidence type="ECO:0000303" key="5">
    <source>
    </source>
</evidence>
<evidence type="ECO:0000305" key="6"/>
<evidence type="ECO:0000312" key="7">
    <source>
        <dbReference type="EMBL" id="KAF4365547.1"/>
    </source>
</evidence>
<feature type="chain" id="PRO_0000460902" description="Germacrene B synthase TPS16CC">
    <location>
        <begin position="1"/>
        <end position="571"/>
    </location>
</feature>
<feature type="short sequence motif" description="DDXXD motif" evidence="3">
    <location>
        <begin position="324"/>
        <end position="328"/>
    </location>
</feature>
<feature type="binding site" evidence="3">
    <location>
        <position position="287"/>
    </location>
    <ligand>
        <name>(2E,6E)-farnesyl diphosphate</name>
        <dbReference type="ChEBI" id="CHEBI:175763"/>
    </ligand>
</feature>
<feature type="binding site" evidence="3">
    <location>
        <position position="324"/>
    </location>
    <ligand>
        <name>(2E,6E)-farnesyl diphosphate</name>
        <dbReference type="ChEBI" id="CHEBI:175763"/>
    </ligand>
</feature>
<feature type="binding site" evidence="3">
    <location>
        <position position="324"/>
    </location>
    <ligand>
        <name>Mg(2+)</name>
        <dbReference type="ChEBI" id="CHEBI:18420"/>
        <label>1</label>
    </ligand>
</feature>
<feature type="binding site" evidence="3">
    <location>
        <position position="324"/>
    </location>
    <ligand>
        <name>Mg(2+)</name>
        <dbReference type="ChEBI" id="CHEBI:18420"/>
        <label>2</label>
    </ligand>
</feature>
<feature type="binding site" evidence="3">
    <location>
        <position position="328"/>
    </location>
    <ligand>
        <name>(2E,6E)-farnesyl diphosphate</name>
        <dbReference type="ChEBI" id="CHEBI:175763"/>
    </ligand>
</feature>
<feature type="binding site" evidence="3">
    <location>
        <position position="328"/>
    </location>
    <ligand>
        <name>Mg(2+)</name>
        <dbReference type="ChEBI" id="CHEBI:18420"/>
        <label>1</label>
    </ligand>
</feature>
<feature type="binding site" evidence="3">
    <location>
        <position position="328"/>
    </location>
    <ligand>
        <name>Mg(2+)</name>
        <dbReference type="ChEBI" id="CHEBI:18420"/>
        <label>2</label>
    </ligand>
</feature>
<feature type="binding site" evidence="3">
    <location>
        <position position="465"/>
    </location>
    <ligand>
        <name>(2E,6E)-farnesyl diphosphate</name>
        <dbReference type="ChEBI" id="CHEBI:175763"/>
    </ligand>
</feature>
<feature type="binding site" evidence="3">
    <location>
        <position position="468"/>
    </location>
    <ligand>
        <name>(2E,6E)-farnesyl diphosphate</name>
        <dbReference type="ChEBI" id="CHEBI:175763"/>
    </ligand>
</feature>
<feature type="binding site" evidence="3">
    <location>
        <position position="468"/>
    </location>
    <ligand>
        <name>Mg(2+)</name>
        <dbReference type="ChEBI" id="CHEBI:18420"/>
        <label>3</label>
    </ligand>
</feature>
<feature type="binding site" evidence="3">
    <location>
        <position position="472"/>
    </location>
    <ligand>
        <name>Mg(2+)</name>
        <dbReference type="ChEBI" id="CHEBI:18420"/>
        <label>3</label>
    </ligand>
</feature>
<feature type="binding site" evidence="3">
    <location>
        <position position="476"/>
    </location>
    <ligand>
        <name>Mg(2+)</name>
        <dbReference type="ChEBI" id="CHEBI:18420"/>
        <label>3</label>
    </ligand>
</feature>
<proteinExistence type="evidence at protein level"/>
<protein>
    <recommendedName>
        <fullName evidence="5">Germacrene B synthase TPS16CC</fullName>
        <ecNumber evidence="4">4.2.3.71</ecNumber>
    </recommendedName>
    <alternativeName>
        <fullName evidence="5">Terpene synthase 16 CC</fullName>
        <shortName evidence="5">CsTPS16CC</shortName>
    </alternativeName>
</protein>
<organism>
    <name type="scientific">Cannabis sativa</name>
    <name type="common">Hemp</name>
    <name type="synonym">Marijuana</name>
    <dbReference type="NCBI Taxonomy" id="3483"/>
    <lineage>
        <taxon>Eukaryota</taxon>
        <taxon>Viridiplantae</taxon>
        <taxon>Streptophyta</taxon>
        <taxon>Embryophyta</taxon>
        <taxon>Tracheophyta</taxon>
        <taxon>Spermatophyta</taxon>
        <taxon>Magnoliopsida</taxon>
        <taxon>eudicotyledons</taxon>
        <taxon>Gunneridae</taxon>
        <taxon>Pentapetalae</taxon>
        <taxon>rosids</taxon>
        <taxon>fabids</taxon>
        <taxon>Rosales</taxon>
        <taxon>Cannabaceae</taxon>
        <taxon>Cannabis</taxon>
    </lineage>
</organism>
<name>T16CC_CANSA</name>
<sequence length="571" mass="67362">MSSQVLASSQKNDKTQNIIRPTTKFHPPIWGDRFLHYNISEQELEYKEGQVEELKEVVRKEIFHGNNKRNIINVSKQLKLIDDVERLGLSYHFESEIEKKLQHIYEITTNNIDHQDQHYYYSNHDEDLHDVSIRFRLLRQHGFNISSNIFEKFKDESGKFKESLKSDIEGMLSLYEASYLSYVEENILDEALAFTTTNLKLVANKKEHPLSHEISLALYRPLRKTLVRLYARHYISIYEKQPSHNKVLLQFAKLDFNLLQSLHKKELSEISRWWKELDLANKLPFARNRIVELYLWILGVFHEPQFSLARKILIKAISMASVADDIYDAYGTFEELELLTEAILRWDISFIDKLSPDYLKTYYKVFLNSYEECEKDLKKEERYKLHYAKESMKKLIQAYFHEAQWLNQGHFPSFDEHLKVSFVSSGYPMLIETSFVGMQDVKTNQVFEWLSTQPKIFRACTIISRFMDDLVSRKFEQERNHVPSTVDCYMKQYGVSEQEACDELNKQVVNLWKEINQEFLRPTSMPSSILVRILNFTKVLDIIYKEGDGYTHVGKLVKDSVAALLIDPIPL</sequence>
<comment type="function">
    <text evidence="4">Involved in sesquiterpene olefins biosynthesis, constituants of cannabinoids and terpenoids-rich resins (PubMed:31138625). Catalyzes mainly the conversion of (2E)-farnesyl diphosphate to germacrene B, which is spontaneously converted to gamma-elemene as a thermal degradation product (PubMed:31138625).</text>
</comment>
<comment type="catalytic activity">
    <reaction evidence="4">
        <text>(2E,6E)-farnesyl diphosphate = (1E,4E)-germacrene B + diphosphate</text>
        <dbReference type="Rhea" id="RHEA:25444"/>
        <dbReference type="ChEBI" id="CHEBI:5337"/>
        <dbReference type="ChEBI" id="CHEBI:33019"/>
        <dbReference type="ChEBI" id="CHEBI:175763"/>
        <dbReference type="EC" id="4.2.3.71"/>
    </reaction>
    <physiologicalReaction direction="left-to-right" evidence="4">
        <dbReference type="Rhea" id="RHEA:25445"/>
    </physiologicalReaction>
</comment>
<comment type="cofactor">
    <cofactor evidence="1">
        <name>Mg(2+)</name>
        <dbReference type="ChEBI" id="CHEBI:18420"/>
    </cofactor>
    <cofactor evidence="1">
        <name>Mn(2+)</name>
        <dbReference type="ChEBI" id="CHEBI:29035"/>
    </cofactor>
    <text evidence="1">Binds 3 Mg(2+) or Mn(2+) ions per subunit.</text>
</comment>
<comment type="pathway">
    <text evidence="2">Secondary metabolite biosynthesis; terpenoid biosynthesis.</text>
</comment>
<comment type="tissue specificity">
    <text evidence="4">Highly expressed in glandular trichomes.</text>
</comment>
<comment type="domain">
    <text evidence="3">The Asp-Asp-Xaa-Xaa-Asp/Glu (DDXXD/E) motif is important for the catalytic activity, presumably through binding to Mg(2+).</text>
</comment>
<comment type="similarity">
    <text evidence="6">Belongs to the terpene synthase family. Tpsb subfamily.</text>
</comment>